<gene>
    <name evidence="1" type="primary">hutU</name>
    <name type="ordered locus">BCG9842_B1557</name>
</gene>
<name>HUTU_BACC2</name>
<reference key="1">
    <citation type="submission" date="2008-10" db="EMBL/GenBank/DDBJ databases">
        <title>Genome sequence of Bacillus cereus G9842.</title>
        <authorList>
            <person name="Dodson R.J."/>
            <person name="Durkin A.S."/>
            <person name="Rosovitz M.J."/>
            <person name="Rasko D.A."/>
            <person name="Hoffmaster A."/>
            <person name="Ravel J."/>
            <person name="Sutton G."/>
        </authorList>
    </citation>
    <scope>NUCLEOTIDE SEQUENCE [LARGE SCALE GENOMIC DNA]</scope>
    <source>
        <strain>G9842</strain>
    </source>
</reference>
<keyword id="KW-0963">Cytoplasm</keyword>
<keyword id="KW-0369">Histidine metabolism</keyword>
<keyword id="KW-0456">Lyase</keyword>
<keyword id="KW-0520">NAD</keyword>
<proteinExistence type="inferred from homology"/>
<sequence>MEKVQQTIRAPRGTELQTKGWVQEAALRMLMNNLDPEVAEKPEELVVYGGIGRAARNWESYNAIVDSLKTLESDETLLVQSGKPVAIFKSHEDAPRVLLANSNLVPKWANWDHFRELEKKGLMMYGQMTAGSWIYIGTQGILQGTYETFGEAARQHFDGSLKGTLTLTAGLGGMGGAQPLAVTMNGGVVIAIDVDKRSIDRRIEKRYCDKYTESLEEALAIANEYKEKKEPISIGLLGNAAEILPELVNRNIIPDLVTDQTSAHDPLNGYIPVGYTLEEAAKLREEDPERYVQLSKESMTKHVEAMLAMQEKGAITFDYGNNIRQVAFDEGLKNAFDFPGFVPAFIRPLFCEGKGPFRWVALSGDPEDIYKTDEVILREFADNEHLCNWIRMARQQVEFQGLPSRICWLGYGERAKFGRIINEMVANGELSAPIVIGRDHLDCGSVASPNRETEAMKDGSDAVADWPILNALINSVNGASWVSVHHGGGVGMGYSLHAGMVIVADGTEAAAKRIERVLTSDPGMGIVRHVDAGYDLAVETAKEKGVNIPMMK</sequence>
<dbReference type="EC" id="4.2.1.49" evidence="1"/>
<dbReference type="EMBL" id="CP001186">
    <property type="protein sequence ID" value="ACK95238.1"/>
    <property type="molecule type" value="Genomic_DNA"/>
</dbReference>
<dbReference type="RefSeq" id="WP_000416937.1">
    <property type="nucleotide sequence ID" value="NC_011772.1"/>
</dbReference>
<dbReference type="SMR" id="B7ISJ1"/>
<dbReference type="KEGG" id="bcg:BCG9842_B1557"/>
<dbReference type="HOGENOM" id="CLU_018868_0_1_9"/>
<dbReference type="UniPathway" id="UPA00379">
    <property type="reaction ID" value="UER00550"/>
</dbReference>
<dbReference type="Proteomes" id="UP000006744">
    <property type="component" value="Chromosome"/>
</dbReference>
<dbReference type="GO" id="GO:0005737">
    <property type="term" value="C:cytoplasm"/>
    <property type="evidence" value="ECO:0007669"/>
    <property type="project" value="UniProtKB-SubCell"/>
</dbReference>
<dbReference type="GO" id="GO:0016153">
    <property type="term" value="F:urocanate hydratase activity"/>
    <property type="evidence" value="ECO:0007669"/>
    <property type="project" value="UniProtKB-UniRule"/>
</dbReference>
<dbReference type="GO" id="GO:0019556">
    <property type="term" value="P:L-histidine catabolic process to glutamate and formamide"/>
    <property type="evidence" value="ECO:0007669"/>
    <property type="project" value="UniProtKB-UniPathway"/>
</dbReference>
<dbReference type="GO" id="GO:0019557">
    <property type="term" value="P:L-histidine catabolic process to glutamate and formate"/>
    <property type="evidence" value="ECO:0007669"/>
    <property type="project" value="UniProtKB-UniPathway"/>
</dbReference>
<dbReference type="FunFam" id="3.40.50.10730:FF:000001">
    <property type="entry name" value="Urocanate hydratase"/>
    <property type="match status" value="1"/>
</dbReference>
<dbReference type="Gene3D" id="3.40.50.10730">
    <property type="entry name" value="Urocanase like domains"/>
    <property type="match status" value="1"/>
</dbReference>
<dbReference type="Gene3D" id="3.40.1770.10">
    <property type="entry name" value="Urocanase superfamily"/>
    <property type="match status" value="1"/>
</dbReference>
<dbReference type="HAMAP" id="MF_00577">
    <property type="entry name" value="HutU"/>
    <property type="match status" value="1"/>
</dbReference>
<dbReference type="InterPro" id="IPR055351">
    <property type="entry name" value="Urocanase"/>
</dbReference>
<dbReference type="InterPro" id="IPR023637">
    <property type="entry name" value="Urocanase-like"/>
</dbReference>
<dbReference type="InterPro" id="IPR035401">
    <property type="entry name" value="Urocanase_C"/>
</dbReference>
<dbReference type="InterPro" id="IPR038364">
    <property type="entry name" value="Urocanase_central_sf"/>
</dbReference>
<dbReference type="InterPro" id="IPR023636">
    <property type="entry name" value="Urocanase_CS"/>
</dbReference>
<dbReference type="InterPro" id="IPR035400">
    <property type="entry name" value="Urocanase_N"/>
</dbReference>
<dbReference type="InterPro" id="IPR035085">
    <property type="entry name" value="Urocanase_Rossmann-like"/>
</dbReference>
<dbReference type="InterPro" id="IPR036190">
    <property type="entry name" value="Urocanase_sf"/>
</dbReference>
<dbReference type="NCBIfam" id="TIGR01228">
    <property type="entry name" value="hutU"/>
    <property type="match status" value="1"/>
</dbReference>
<dbReference type="NCBIfam" id="NF003820">
    <property type="entry name" value="PRK05414.1"/>
    <property type="match status" value="1"/>
</dbReference>
<dbReference type="PANTHER" id="PTHR12216">
    <property type="entry name" value="UROCANATE HYDRATASE"/>
    <property type="match status" value="1"/>
</dbReference>
<dbReference type="PANTHER" id="PTHR12216:SF4">
    <property type="entry name" value="UROCANATE HYDRATASE"/>
    <property type="match status" value="1"/>
</dbReference>
<dbReference type="Pfam" id="PF01175">
    <property type="entry name" value="Urocanase"/>
    <property type="match status" value="1"/>
</dbReference>
<dbReference type="Pfam" id="PF17392">
    <property type="entry name" value="Urocanase_C"/>
    <property type="match status" value="1"/>
</dbReference>
<dbReference type="Pfam" id="PF17391">
    <property type="entry name" value="Urocanase_N"/>
    <property type="match status" value="1"/>
</dbReference>
<dbReference type="PIRSF" id="PIRSF001423">
    <property type="entry name" value="Urocanate_hydrat"/>
    <property type="match status" value="1"/>
</dbReference>
<dbReference type="SUPFAM" id="SSF111326">
    <property type="entry name" value="Urocanase"/>
    <property type="match status" value="1"/>
</dbReference>
<dbReference type="PROSITE" id="PS01233">
    <property type="entry name" value="UROCANASE"/>
    <property type="match status" value="1"/>
</dbReference>
<feature type="chain" id="PRO_1000129558" description="Urocanate hydratase">
    <location>
        <begin position="1"/>
        <end position="552"/>
    </location>
</feature>
<feature type="active site" evidence="1">
    <location>
        <position position="407"/>
    </location>
</feature>
<feature type="binding site" evidence="1">
    <location>
        <begin position="49"/>
        <end position="50"/>
    </location>
    <ligand>
        <name>NAD(+)</name>
        <dbReference type="ChEBI" id="CHEBI:57540"/>
    </ligand>
</feature>
<feature type="binding site" evidence="1">
    <location>
        <position position="127"/>
    </location>
    <ligand>
        <name>NAD(+)</name>
        <dbReference type="ChEBI" id="CHEBI:57540"/>
    </ligand>
</feature>
<feature type="binding site" evidence="1">
    <location>
        <begin position="173"/>
        <end position="175"/>
    </location>
    <ligand>
        <name>NAD(+)</name>
        <dbReference type="ChEBI" id="CHEBI:57540"/>
    </ligand>
</feature>
<feature type="binding site" evidence="1">
    <location>
        <position position="193"/>
    </location>
    <ligand>
        <name>NAD(+)</name>
        <dbReference type="ChEBI" id="CHEBI:57540"/>
    </ligand>
</feature>
<feature type="binding site" evidence="1">
    <location>
        <begin position="239"/>
        <end position="240"/>
    </location>
    <ligand>
        <name>NAD(+)</name>
        <dbReference type="ChEBI" id="CHEBI:57540"/>
    </ligand>
</feature>
<feature type="binding site" evidence="1">
    <location>
        <begin position="260"/>
        <end position="264"/>
    </location>
    <ligand>
        <name>NAD(+)</name>
        <dbReference type="ChEBI" id="CHEBI:57540"/>
    </ligand>
</feature>
<feature type="binding site" evidence="1">
    <location>
        <begin position="270"/>
        <end position="271"/>
    </location>
    <ligand>
        <name>NAD(+)</name>
        <dbReference type="ChEBI" id="CHEBI:57540"/>
    </ligand>
</feature>
<feature type="binding site" evidence="1">
    <location>
        <position position="319"/>
    </location>
    <ligand>
        <name>NAD(+)</name>
        <dbReference type="ChEBI" id="CHEBI:57540"/>
    </ligand>
</feature>
<feature type="binding site" evidence="1">
    <location>
        <position position="489"/>
    </location>
    <ligand>
        <name>NAD(+)</name>
        <dbReference type="ChEBI" id="CHEBI:57540"/>
    </ligand>
</feature>
<evidence type="ECO:0000255" key="1">
    <source>
        <dbReference type="HAMAP-Rule" id="MF_00577"/>
    </source>
</evidence>
<comment type="function">
    <text evidence="1">Catalyzes the conversion of urocanate to 4-imidazolone-5-propionate.</text>
</comment>
<comment type="catalytic activity">
    <reaction evidence="1">
        <text>4-imidazolone-5-propanoate = trans-urocanate + H2O</text>
        <dbReference type="Rhea" id="RHEA:13101"/>
        <dbReference type="ChEBI" id="CHEBI:15377"/>
        <dbReference type="ChEBI" id="CHEBI:17771"/>
        <dbReference type="ChEBI" id="CHEBI:77893"/>
        <dbReference type="EC" id="4.2.1.49"/>
    </reaction>
</comment>
<comment type="cofactor">
    <cofactor evidence="1">
        <name>NAD(+)</name>
        <dbReference type="ChEBI" id="CHEBI:57540"/>
    </cofactor>
    <text evidence="1">Binds 1 NAD(+) per subunit.</text>
</comment>
<comment type="pathway">
    <text evidence="1">Amino-acid degradation; L-histidine degradation into L-glutamate; N-formimidoyl-L-glutamate from L-histidine: step 2/3.</text>
</comment>
<comment type="subcellular location">
    <subcellularLocation>
        <location evidence="1">Cytoplasm</location>
    </subcellularLocation>
</comment>
<comment type="similarity">
    <text evidence="1">Belongs to the urocanase family.</text>
</comment>
<accession>B7ISJ1</accession>
<organism>
    <name type="scientific">Bacillus cereus (strain G9842)</name>
    <dbReference type="NCBI Taxonomy" id="405531"/>
    <lineage>
        <taxon>Bacteria</taxon>
        <taxon>Bacillati</taxon>
        <taxon>Bacillota</taxon>
        <taxon>Bacilli</taxon>
        <taxon>Bacillales</taxon>
        <taxon>Bacillaceae</taxon>
        <taxon>Bacillus</taxon>
        <taxon>Bacillus cereus group</taxon>
    </lineage>
</organism>
<protein>
    <recommendedName>
        <fullName evidence="1">Urocanate hydratase</fullName>
        <shortName evidence="1">Urocanase</shortName>
        <ecNumber evidence="1">4.2.1.49</ecNumber>
    </recommendedName>
    <alternativeName>
        <fullName evidence="1">Imidazolonepropionate hydrolase</fullName>
    </alternativeName>
</protein>